<reference key="1">
    <citation type="journal article" date="2007" name="PLoS Biol.">
        <title>Evolution of symbiotic bacteria in the distal human intestine.</title>
        <authorList>
            <person name="Xu J."/>
            <person name="Mahowald M.A."/>
            <person name="Ley R.E."/>
            <person name="Lozupone C.A."/>
            <person name="Hamady M."/>
            <person name="Martens E.C."/>
            <person name="Henrissat B."/>
            <person name="Coutinho P.M."/>
            <person name="Minx P."/>
            <person name="Latreille P."/>
            <person name="Cordum H."/>
            <person name="Van Brunt A."/>
            <person name="Kim K."/>
            <person name="Fulton R.S."/>
            <person name="Fulton L.A."/>
            <person name="Clifton S.W."/>
            <person name="Wilson R.K."/>
            <person name="Knight R.D."/>
            <person name="Gordon J.I."/>
        </authorList>
    </citation>
    <scope>NUCLEOTIDE SEQUENCE [LARGE SCALE GENOMIC DNA]</scope>
    <source>
        <strain>ATCC 8503 / DSM 20701 / CIP 104284 / JCM 5825 / NCTC 11152</strain>
    </source>
</reference>
<accession>A6LE82</accession>
<dbReference type="EMBL" id="CP000140">
    <property type="protein sequence ID" value="ABR43996.1"/>
    <property type="molecule type" value="Genomic_DNA"/>
</dbReference>
<dbReference type="RefSeq" id="WP_011966796.1">
    <property type="nucleotide sequence ID" value="NC_009615.1"/>
</dbReference>
<dbReference type="SMR" id="A6LE82"/>
<dbReference type="STRING" id="435591.BDI_2265"/>
<dbReference type="PaxDb" id="435591-BDI_2265"/>
<dbReference type="KEGG" id="pdi:BDI_2265"/>
<dbReference type="PATRIC" id="fig|435591.13.peg.2250"/>
<dbReference type="eggNOG" id="COG0222">
    <property type="taxonomic scope" value="Bacteria"/>
</dbReference>
<dbReference type="HOGENOM" id="CLU_086499_3_1_10"/>
<dbReference type="BioCyc" id="PDIS435591:G1G5A-2328-MONOMER"/>
<dbReference type="Proteomes" id="UP000000566">
    <property type="component" value="Chromosome"/>
</dbReference>
<dbReference type="GO" id="GO:0022625">
    <property type="term" value="C:cytosolic large ribosomal subunit"/>
    <property type="evidence" value="ECO:0007669"/>
    <property type="project" value="TreeGrafter"/>
</dbReference>
<dbReference type="GO" id="GO:0003729">
    <property type="term" value="F:mRNA binding"/>
    <property type="evidence" value="ECO:0007669"/>
    <property type="project" value="TreeGrafter"/>
</dbReference>
<dbReference type="GO" id="GO:0003735">
    <property type="term" value="F:structural constituent of ribosome"/>
    <property type="evidence" value="ECO:0007669"/>
    <property type="project" value="InterPro"/>
</dbReference>
<dbReference type="GO" id="GO:0006412">
    <property type="term" value="P:translation"/>
    <property type="evidence" value="ECO:0007669"/>
    <property type="project" value="UniProtKB-UniRule"/>
</dbReference>
<dbReference type="CDD" id="cd00387">
    <property type="entry name" value="Ribosomal_L7_L12"/>
    <property type="match status" value="1"/>
</dbReference>
<dbReference type="FunFam" id="3.30.1390.10:FF:000001">
    <property type="entry name" value="50S ribosomal protein L7/L12"/>
    <property type="match status" value="1"/>
</dbReference>
<dbReference type="Gene3D" id="3.30.1390.10">
    <property type="match status" value="1"/>
</dbReference>
<dbReference type="Gene3D" id="1.20.5.710">
    <property type="entry name" value="Single helix bin"/>
    <property type="match status" value="1"/>
</dbReference>
<dbReference type="HAMAP" id="MF_00368">
    <property type="entry name" value="Ribosomal_bL12"/>
    <property type="match status" value="1"/>
</dbReference>
<dbReference type="InterPro" id="IPR000206">
    <property type="entry name" value="Ribosomal_bL12"/>
</dbReference>
<dbReference type="InterPro" id="IPR013823">
    <property type="entry name" value="Ribosomal_bL12_C"/>
</dbReference>
<dbReference type="InterPro" id="IPR014719">
    <property type="entry name" value="Ribosomal_bL12_C/ClpS-like"/>
</dbReference>
<dbReference type="InterPro" id="IPR008932">
    <property type="entry name" value="Ribosomal_bL12_oligo"/>
</dbReference>
<dbReference type="InterPro" id="IPR036235">
    <property type="entry name" value="Ribosomal_bL12_oligo_N_sf"/>
</dbReference>
<dbReference type="NCBIfam" id="TIGR00855">
    <property type="entry name" value="L12"/>
    <property type="match status" value="1"/>
</dbReference>
<dbReference type="PANTHER" id="PTHR45987">
    <property type="entry name" value="39S RIBOSOMAL PROTEIN L12"/>
    <property type="match status" value="1"/>
</dbReference>
<dbReference type="PANTHER" id="PTHR45987:SF4">
    <property type="entry name" value="LARGE RIBOSOMAL SUBUNIT PROTEIN BL12M"/>
    <property type="match status" value="1"/>
</dbReference>
<dbReference type="Pfam" id="PF00542">
    <property type="entry name" value="Ribosomal_L12"/>
    <property type="match status" value="1"/>
</dbReference>
<dbReference type="Pfam" id="PF16320">
    <property type="entry name" value="Ribosomal_L12_N"/>
    <property type="match status" value="1"/>
</dbReference>
<dbReference type="SUPFAM" id="SSF54736">
    <property type="entry name" value="ClpS-like"/>
    <property type="match status" value="1"/>
</dbReference>
<dbReference type="SUPFAM" id="SSF48300">
    <property type="entry name" value="Ribosomal protein L7/12, oligomerisation (N-terminal) domain"/>
    <property type="match status" value="1"/>
</dbReference>
<protein>
    <recommendedName>
        <fullName evidence="1">Large ribosomal subunit protein bL12</fullName>
    </recommendedName>
    <alternativeName>
        <fullName evidence="2">50S ribosomal protein L7/L12</fullName>
    </alternativeName>
</protein>
<feature type="chain" id="PRO_1000007050" description="Large ribosomal subunit protein bL12">
    <location>
        <begin position="1"/>
        <end position="125"/>
    </location>
</feature>
<name>RL7_PARD8</name>
<evidence type="ECO:0000255" key="1">
    <source>
        <dbReference type="HAMAP-Rule" id="MF_00368"/>
    </source>
</evidence>
<evidence type="ECO:0000305" key="2"/>
<sequence length="125" mass="12735">MADLKAFAEQLVNLTVKEVSELATILKEEYGIEPAAAAVAVAGPAAGGAAAAAEEKTSFDVVLKAAGANKLAIVKLVKELTGLGLKEAKDMVDSAPSAIKEGIAKADAEAMKKQLEEAGAEVELK</sequence>
<keyword id="KW-1185">Reference proteome</keyword>
<keyword id="KW-0687">Ribonucleoprotein</keyword>
<keyword id="KW-0689">Ribosomal protein</keyword>
<organism>
    <name type="scientific">Parabacteroides distasonis (strain ATCC 8503 / DSM 20701 / CIP 104284 / JCM 5825 / NCTC 11152)</name>
    <dbReference type="NCBI Taxonomy" id="435591"/>
    <lineage>
        <taxon>Bacteria</taxon>
        <taxon>Pseudomonadati</taxon>
        <taxon>Bacteroidota</taxon>
        <taxon>Bacteroidia</taxon>
        <taxon>Bacteroidales</taxon>
        <taxon>Tannerellaceae</taxon>
        <taxon>Parabacteroides</taxon>
    </lineage>
</organism>
<comment type="function">
    <text evidence="1">Forms part of the ribosomal stalk which helps the ribosome interact with GTP-bound translation factors. Is thus essential for accurate translation.</text>
</comment>
<comment type="subunit">
    <text evidence="1">Homodimer. Part of the ribosomal stalk of the 50S ribosomal subunit. Forms a multimeric L10(L12)X complex, where L10 forms an elongated spine to which 2 to 4 L12 dimers bind in a sequential fashion. Binds GTP-bound translation factors.</text>
</comment>
<comment type="similarity">
    <text evidence="1">Belongs to the bacterial ribosomal protein bL12 family.</text>
</comment>
<gene>
    <name evidence="1" type="primary">rplL</name>
    <name type="ordered locus">BDI_2265</name>
</gene>
<proteinExistence type="inferred from homology"/>